<organism>
    <name type="scientific">Bos taurus</name>
    <name type="common">Bovine</name>
    <dbReference type="NCBI Taxonomy" id="9913"/>
    <lineage>
        <taxon>Eukaryota</taxon>
        <taxon>Metazoa</taxon>
        <taxon>Chordata</taxon>
        <taxon>Craniata</taxon>
        <taxon>Vertebrata</taxon>
        <taxon>Euteleostomi</taxon>
        <taxon>Mammalia</taxon>
        <taxon>Eutheria</taxon>
        <taxon>Laurasiatheria</taxon>
        <taxon>Artiodactyla</taxon>
        <taxon>Ruminantia</taxon>
        <taxon>Pecora</taxon>
        <taxon>Bovidae</taxon>
        <taxon>Bovinae</taxon>
        <taxon>Bos</taxon>
    </lineage>
</organism>
<name>DAAF3_BOVIN</name>
<proteinExistence type="inferred from homology"/>
<sequence length="544" mass="59563">MTTPAGSGTGFGSVSWWGLSPAVDLQAESPPVDPDSQAETEHETPELNVLLLGSVDGRHLLRTLARAALWPRRRFHFYVLENNLEAVARHILIFSLALEDPEKMGLQERSETFLEVWGNALLRPPVAAFVRAQAGRLAHLVPEPDRLAEQLPWLSLGALKFRERDALEAVFRFWAGGEKGPEAFPMSRLWDSRLRQYLGSRYDARHGVSDWDLHMKLHDRGARVIHTREFRRWRDTGVAFELRDSSAYHVPNRTLASGRLLSHRGERVAARGYWGDIATGPFVAFGIEADDETLLRTSNGQPVKTACEITEHNVAELFREMAAWGHPRAAEGDPEQVQGGAEGSSEPAAPAPEPFTVHFLSLDSAHTLHHKSCYMGQFQLLYVACGMVHLLSAELGACVAPGGRLIVELAQFLVDLRQEQLQAFSSRVGELAQAAGFAPQLGGKPSDTFARFYKAGDSAPGHEDPAVESGTPPPEVLAPPLEATDPPSEDRTQPLESGNPPSEPLKLTSESQASLLEASVPPTGSQAPKSENQTVPPETKYPIP</sequence>
<reference key="1">
    <citation type="journal article" date="2009" name="Genome Biol.">
        <title>A whole-genome assembly of the domestic cow, Bos taurus.</title>
        <authorList>
            <person name="Zimin A.V."/>
            <person name="Delcher A.L."/>
            <person name="Florea L."/>
            <person name="Kelley D.R."/>
            <person name="Schatz M.C."/>
            <person name="Puiu D."/>
            <person name="Hanrahan F."/>
            <person name="Pertea G."/>
            <person name="Van Tassell C.P."/>
            <person name="Sonstegard T.S."/>
            <person name="Marcais G."/>
            <person name="Roberts M."/>
            <person name="Subramanian P."/>
            <person name="Yorke J.A."/>
            <person name="Salzberg S.L."/>
        </authorList>
    </citation>
    <scope>NUCLEOTIDE SEQUENCE [LARGE SCALE GENOMIC DNA]</scope>
    <source>
        <strain>Hereford</strain>
    </source>
</reference>
<reference key="2">
    <citation type="journal article" date="2009" name="Science">
        <title>The genome sequence of taurine cattle: a window to ruminant biology and evolution.</title>
        <authorList>
            <consortium name="The bovine genome sequencing and analysis consortium"/>
        </authorList>
    </citation>
    <scope>NUCLEOTIDE SEQUENCE [LARGE SCALE GENOMIC DNA]</scope>
    <source>
        <strain>Hereford</strain>
    </source>
</reference>
<keyword id="KW-0970">Cilium biogenesis/degradation</keyword>
<keyword id="KW-0963">Cytoplasm</keyword>
<keyword id="KW-1185">Reference proteome</keyword>
<comment type="function">
    <text evidence="1">Required for the assembly of axonemal inner and outer dynein arms. Involved in preassembly of dyneins into complexes before their transport into cilia (By similarity).</text>
</comment>
<comment type="subcellular location">
    <subcellularLocation>
        <location evidence="1">Cytoplasm</location>
    </subcellularLocation>
    <subcellularLocation>
        <location evidence="2">Dynein axonemal particle</location>
    </subcellularLocation>
</comment>
<comment type="similarity">
    <text evidence="4">Belongs to the DNAAF3 family.</text>
</comment>
<dbReference type="EMBL" id="DAAA02047752">
    <property type="status" value="NOT_ANNOTATED_CDS"/>
    <property type="molecule type" value="Genomic_DNA"/>
</dbReference>
<dbReference type="EMBL" id="AAFC03089060">
    <property type="status" value="NOT_ANNOTATED_CDS"/>
    <property type="molecule type" value="Genomic_DNA"/>
</dbReference>
<dbReference type="FunCoup" id="F1MLB4">
    <property type="interactions" value="35"/>
</dbReference>
<dbReference type="STRING" id="9913.ENSBTAP00000003267"/>
<dbReference type="PaxDb" id="9913-ENSBTAP00000003267"/>
<dbReference type="eggNOG" id="ENOG502QT97">
    <property type="taxonomic scope" value="Eukaryota"/>
</dbReference>
<dbReference type="HOGENOM" id="CLU_024420_2_1_1"/>
<dbReference type="InParanoid" id="F1MLB4"/>
<dbReference type="OrthoDB" id="538817at2759"/>
<dbReference type="TreeFam" id="TF323981"/>
<dbReference type="Proteomes" id="UP000009136">
    <property type="component" value="Unplaced"/>
</dbReference>
<dbReference type="GO" id="GO:0120293">
    <property type="term" value="C:dynein axonemal particle"/>
    <property type="evidence" value="ECO:0000250"/>
    <property type="project" value="UniProtKB"/>
</dbReference>
<dbReference type="GO" id="GO:0070286">
    <property type="term" value="P:axonemal dynein complex assembly"/>
    <property type="evidence" value="ECO:0000250"/>
    <property type="project" value="UniProtKB"/>
</dbReference>
<dbReference type="GO" id="GO:0044458">
    <property type="term" value="P:motile cilium assembly"/>
    <property type="evidence" value="ECO:0000250"/>
    <property type="project" value="UniProtKB"/>
</dbReference>
<dbReference type="InterPro" id="IPR039304">
    <property type="entry name" value="DNAAF3"/>
</dbReference>
<dbReference type="InterPro" id="IPR028235">
    <property type="entry name" value="DNAAF3_C"/>
</dbReference>
<dbReference type="InterPro" id="IPR027974">
    <property type="entry name" value="DUF4470"/>
</dbReference>
<dbReference type="PANTHER" id="PTHR22118">
    <property type="entry name" value="DYNEIN ASSEMBLY FACTOR 3, AXONEMAL"/>
    <property type="match status" value="1"/>
</dbReference>
<dbReference type="PANTHER" id="PTHR22118:SF14">
    <property type="entry name" value="DYNEIN AXONEMAL ASSEMBLY FACTOR 3"/>
    <property type="match status" value="1"/>
</dbReference>
<dbReference type="Pfam" id="PF14737">
    <property type="entry name" value="DUF4470"/>
    <property type="match status" value="1"/>
</dbReference>
<dbReference type="Pfam" id="PF14740">
    <property type="entry name" value="DUF4471"/>
    <property type="match status" value="1"/>
</dbReference>
<evidence type="ECO:0000250" key="1"/>
<evidence type="ECO:0000250" key="2">
    <source>
        <dbReference type="UniProtKB" id="Q32NQ7"/>
    </source>
</evidence>
<evidence type="ECO:0000256" key="3">
    <source>
        <dbReference type="SAM" id="MobiDB-lite"/>
    </source>
</evidence>
<evidence type="ECO:0000305" key="4"/>
<gene>
    <name type="primary">DNAAF3</name>
</gene>
<accession>F1MLB4</accession>
<accession>F1MKE1</accession>
<feature type="chain" id="PRO_0000416893" description="Dynein axonemal assembly factor 3">
    <location>
        <begin position="1"/>
        <end position="544"/>
    </location>
</feature>
<feature type="region of interest" description="Disordered" evidence="3">
    <location>
        <begin position="328"/>
        <end position="350"/>
    </location>
</feature>
<feature type="region of interest" description="Disordered" evidence="3">
    <location>
        <begin position="448"/>
        <end position="544"/>
    </location>
</feature>
<feature type="compositionally biased region" description="Polar residues" evidence="3">
    <location>
        <begin position="522"/>
        <end position="536"/>
    </location>
</feature>
<protein>
    <recommendedName>
        <fullName>Dynein axonemal assembly factor 3</fullName>
    </recommendedName>
</protein>